<name>FAR6_PENMO</name>
<sequence>DGRTPALRLRF</sequence>
<reference key="1">
    <citation type="journal article" date="2002" name="Comp. Biochem. Physiol.">
        <title>Seven novel FMRFamide-like neuropeptide sequences from the eyestalk of the giant tiger prawn Penaeus monodon.</title>
        <authorList>
            <person name="Sithigorngul P."/>
            <person name="Pupuem J."/>
            <person name="Krungkasem C."/>
            <person name="Longyant S."/>
            <person name="Chaivisuthangkura P."/>
            <person name="Sithigorngul W."/>
            <person name="Petsom A."/>
        </authorList>
    </citation>
    <scope>PROTEIN SEQUENCE</scope>
    <scope>AMIDATION AT PHE-11</scope>
    <scope>MASS SPECTROMETRY</scope>
    <source>
        <tissue>Eyestalk</tissue>
    </source>
</reference>
<dbReference type="GO" id="GO:0005576">
    <property type="term" value="C:extracellular region"/>
    <property type="evidence" value="ECO:0007669"/>
    <property type="project" value="UniProtKB-SubCell"/>
</dbReference>
<dbReference type="GO" id="GO:0007218">
    <property type="term" value="P:neuropeptide signaling pathway"/>
    <property type="evidence" value="ECO:0000304"/>
    <property type="project" value="UniProtKB"/>
</dbReference>
<organism evidence="2">
    <name type="scientific">Penaeus monodon</name>
    <name type="common">Giant tiger prawn</name>
    <dbReference type="NCBI Taxonomy" id="6687"/>
    <lineage>
        <taxon>Eukaryota</taxon>
        <taxon>Metazoa</taxon>
        <taxon>Ecdysozoa</taxon>
        <taxon>Arthropoda</taxon>
        <taxon>Crustacea</taxon>
        <taxon>Multicrustacea</taxon>
        <taxon>Malacostraca</taxon>
        <taxon>Eumalacostraca</taxon>
        <taxon>Eucarida</taxon>
        <taxon>Decapoda</taxon>
        <taxon>Dendrobranchiata</taxon>
        <taxon>Penaeoidea</taxon>
        <taxon>Penaeidae</taxon>
        <taxon>Penaeus</taxon>
    </lineage>
</organism>
<feature type="peptide" id="PRO_0000043702" description="FMRFamide-like neuropeptide FLP6">
    <location>
        <begin position="1"/>
        <end position="11"/>
    </location>
</feature>
<feature type="modified residue" description="Phenylalanine amide" evidence="1">
    <location>
        <position position="11"/>
    </location>
</feature>
<accession>P83321</accession>
<evidence type="ECO:0000269" key="1">
    <source>
    </source>
</evidence>
<evidence type="ECO:0000305" key="2"/>
<keyword id="KW-0027">Amidation</keyword>
<keyword id="KW-0903">Direct protein sequencing</keyword>
<keyword id="KW-0527">Neuropeptide</keyword>
<keyword id="KW-0964">Secreted</keyword>
<proteinExistence type="evidence at protein level"/>
<protein>
    <recommendedName>
        <fullName>FMRFamide-like neuropeptide FLP6</fullName>
    </recommendedName>
    <alternativeName>
        <fullName>DGRTPALRLRF-amide</fullName>
    </alternativeName>
</protein>
<comment type="subcellular location">
    <subcellularLocation>
        <location>Secreted</location>
    </subcellularLocation>
</comment>
<comment type="mass spectrometry"/>
<comment type="similarity">
    <text evidence="2">Belongs to the FARP (FMRFamide related peptide) family.</text>
</comment>